<dbReference type="EC" id="1.2.1.38" evidence="1"/>
<dbReference type="EMBL" id="CR555306">
    <property type="protein sequence ID" value="CAI06622.1"/>
    <property type="molecule type" value="Genomic_DNA"/>
</dbReference>
<dbReference type="RefSeq" id="WP_011236352.1">
    <property type="nucleotide sequence ID" value="NC_006513.1"/>
</dbReference>
<dbReference type="SMR" id="Q5P7T9"/>
<dbReference type="STRING" id="76114.ebA935"/>
<dbReference type="KEGG" id="eba:ebA935"/>
<dbReference type="eggNOG" id="COG0002">
    <property type="taxonomic scope" value="Bacteria"/>
</dbReference>
<dbReference type="HOGENOM" id="CLU_006384_0_1_4"/>
<dbReference type="OrthoDB" id="9801289at2"/>
<dbReference type="UniPathway" id="UPA00068">
    <property type="reaction ID" value="UER00108"/>
</dbReference>
<dbReference type="Proteomes" id="UP000006552">
    <property type="component" value="Chromosome"/>
</dbReference>
<dbReference type="GO" id="GO:0005737">
    <property type="term" value="C:cytoplasm"/>
    <property type="evidence" value="ECO:0007669"/>
    <property type="project" value="UniProtKB-SubCell"/>
</dbReference>
<dbReference type="GO" id="GO:0003942">
    <property type="term" value="F:N-acetyl-gamma-glutamyl-phosphate reductase activity"/>
    <property type="evidence" value="ECO:0007669"/>
    <property type="project" value="UniProtKB-UniRule"/>
</dbReference>
<dbReference type="GO" id="GO:0051287">
    <property type="term" value="F:NAD binding"/>
    <property type="evidence" value="ECO:0007669"/>
    <property type="project" value="InterPro"/>
</dbReference>
<dbReference type="GO" id="GO:0070401">
    <property type="term" value="F:NADP+ binding"/>
    <property type="evidence" value="ECO:0007669"/>
    <property type="project" value="InterPro"/>
</dbReference>
<dbReference type="GO" id="GO:0006526">
    <property type="term" value="P:L-arginine biosynthetic process"/>
    <property type="evidence" value="ECO:0007669"/>
    <property type="project" value="UniProtKB-UniRule"/>
</dbReference>
<dbReference type="CDD" id="cd23934">
    <property type="entry name" value="AGPR_1_C"/>
    <property type="match status" value="1"/>
</dbReference>
<dbReference type="CDD" id="cd17895">
    <property type="entry name" value="AGPR_1_N"/>
    <property type="match status" value="1"/>
</dbReference>
<dbReference type="FunFam" id="3.30.360.10:FF:000014">
    <property type="entry name" value="N-acetyl-gamma-glutamyl-phosphate reductase"/>
    <property type="match status" value="1"/>
</dbReference>
<dbReference type="Gene3D" id="3.30.360.10">
    <property type="entry name" value="Dihydrodipicolinate Reductase, domain 2"/>
    <property type="match status" value="1"/>
</dbReference>
<dbReference type="Gene3D" id="3.40.50.720">
    <property type="entry name" value="NAD(P)-binding Rossmann-like Domain"/>
    <property type="match status" value="1"/>
</dbReference>
<dbReference type="HAMAP" id="MF_00150">
    <property type="entry name" value="ArgC_type1"/>
    <property type="match status" value="1"/>
</dbReference>
<dbReference type="InterPro" id="IPR023013">
    <property type="entry name" value="AGPR_AS"/>
</dbReference>
<dbReference type="InterPro" id="IPR000706">
    <property type="entry name" value="AGPR_type-1"/>
</dbReference>
<dbReference type="InterPro" id="IPR036291">
    <property type="entry name" value="NAD(P)-bd_dom_sf"/>
</dbReference>
<dbReference type="InterPro" id="IPR050085">
    <property type="entry name" value="NAGSA_dehydrogenase"/>
</dbReference>
<dbReference type="InterPro" id="IPR000534">
    <property type="entry name" value="Semialdehyde_DH_NAD-bd"/>
</dbReference>
<dbReference type="NCBIfam" id="TIGR01850">
    <property type="entry name" value="argC"/>
    <property type="match status" value="1"/>
</dbReference>
<dbReference type="PANTHER" id="PTHR32338:SF10">
    <property type="entry name" value="N-ACETYL-GAMMA-GLUTAMYL-PHOSPHATE REDUCTASE, CHLOROPLASTIC-RELATED"/>
    <property type="match status" value="1"/>
</dbReference>
<dbReference type="PANTHER" id="PTHR32338">
    <property type="entry name" value="N-ACETYL-GAMMA-GLUTAMYL-PHOSPHATE REDUCTASE, CHLOROPLASTIC-RELATED-RELATED"/>
    <property type="match status" value="1"/>
</dbReference>
<dbReference type="Pfam" id="PF01118">
    <property type="entry name" value="Semialdhyde_dh"/>
    <property type="match status" value="1"/>
</dbReference>
<dbReference type="Pfam" id="PF22698">
    <property type="entry name" value="Semialdhyde_dhC_1"/>
    <property type="match status" value="1"/>
</dbReference>
<dbReference type="SMART" id="SM00859">
    <property type="entry name" value="Semialdhyde_dh"/>
    <property type="match status" value="1"/>
</dbReference>
<dbReference type="SUPFAM" id="SSF55347">
    <property type="entry name" value="Glyceraldehyde-3-phosphate dehydrogenase-like, C-terminal domain"/>
    <property type="match status" value="1"/>
</dbReference>
<dbReference type="SUPFAM" id="SSF51735">
    <property type="entry name" value="NAD(P)-binding Rossmann-fold domains"/>
    <property type="match status" value="1"/>
</dbReference>
<dbReference type="PROSITE" id="PS01224">
    <property type="entry name" value="ARGC"/>
    <property type="match status" value="1"/>
</dbReference>
<accession>Q5P7T9</accession>
<gene>
    <name evidence="1" type="primary">argC</name>
    <name type="ordered locus">AZOSEA05000</name>
    <name type="ORF">ebA935</name>
</gene>
<reference key="1">
    <citation type="journal article" date="2005" name="Arch. Microbiol.">
        <title>The genome sequence of an anaerobic aromatic-degrading denitrifying bacterium, strain EbN1.</title>
        <authorList>
            <person name="Rabus R."/>
            <person name="Kube M."/>
            <person name="Heider J."/>
            <person name="Beck A."/>
            <person name="Heitmann K."/>
            <person name="Widdel F."/>
            <person name="Reinhardt R."/>
        </authorList>
    </citation>
    <scope>NUCLEOTIDE SEQUENCE [LARGE SCALE GENOMIC DNA]</scope>
    <source>
        <strain>DSM 19018 / LMG 30748 / EbN1</strain>
    </source>
</reference>
<proteinExistence type="inferred from homology"/>
<name>ARGC_AROAE</name>
<feature type="chain" id="PRO_0000112376" description="N-acetyl-gamma-glutamyl-phosphate reductase">
    <location>
        <begin position="1"/>
        <end position="342"/>
    </location>
</feature>
<feature type="active site" evidence="1">
    <location>
        <position position="149"/>
    </location>
</feature>
<sequence length="342" mass="37072">MIKIGVVGGTGYTGVELLRLLARHPEANLVAITSRGDAGMPVCDMFPSLRGRVDLRFVTPQDAALDRCDVVFFATPNGIAMQQARELVDAGVRLIDLAADFRIRDVGEWEKWYGMKHASPELVAEAVYGLPERNRERIRSARILANPGCYPTAVQLGFLPLVEAGVVDLSHLIADVKSGVSGAGRKAEVHTLFAEAADNFKAYAVAGHRHLPEIRQGLEAMAGQGVGLTFVPHLTPIIRGIHATLYARLSTDVNVQKLFEERYQNELFVDVLPAGSHPETRSVRASNLCRVAVHRPQGSDVVVVLSVIDNLVKGAAGQAVQCMNIMFELDESLGLDILPVSP</sequence>
<keyword id="KW-0028">Amino-acid biosynthesis</keyword>
<keyword id="KW-0055">Arginine biosynthesis</keyword>
<keyword id="KW-0963">Cytoplasm</keyword>
<keyword id="KW-0521">NADP</keyword>
<keyword id="KW-0560">Oxidoreductase</keyword>
<keyword id="KW-1185">Reference proteome</keyword>
<evidence type="ECO:0000255" key="1">
    <source>
        <dbReference type="HAMAP-Rule" id="MF_00150"/>
    </source>
</evidence>
<comment type="function">
    <text evidence="1">Catalyzes the NADPH-dependent reduction of N-acetyl-5-glutamyl phosphate to yield N-acetyl-L-glutamate 5-semialdehyde.</text>
</comment>
<comment type="catalytic activity">
    <reaction evidence="1">
        <text>N-acetyl-L-glutamate 5-semialdehyde + phosphate + NADP(+) = N-acetyl-L-glutamyl 5-phosphate + NADPH + H(+)</text>
        <dbReference type="Rhea" id="RHEA:21588"/>
        <dbReference type="ChEBI" id="CHEBI:15378"/>
        <dbReference type="ChEBI" id="CHEBI:29123"/>
        <dbReference type="ChEBI" id="CHEBI:43474"/>
        <dbReference type="ChEBI" id="CHEBI:57783"/>
        <dbReference type="ChEBI" id="CHEBI:57936"/>
        <dbReference type="ChEBI" id="CHEBI:58349"/>
        <dbReference type="EC" id="1.2.1.38"/>
    </reaction>
</comment>
<comment type="pathway">
    <text evidence="1">Amino-acid biosynthesis; L-arginine biosynthesis; N(2)-acetyl-L-ornithine from L-glutamate: step 3/4.</text>
</comment>
<comment type="subcellular location">
    <subcellularLocation>
        <location evidence="1">Cytoplasm</location>
    </subcellularLocation>
</comment>
<comment type="similarity">
    <text evidence="1">Belongs to the NAGSA dehydrogenase family. Type 1 subfamily.</text>
</comment>
<protein>
    <recommendedName>
        <fullName evidence="1">N-acetyl-gamma-glutamyl-phosphate reductase</fullName>
        <shortName evidence="1">AGPR</shortName>
        <ecNumber evidence="1">1.2.1.38</ecNumber>
    </recommendedName>
    <alternativeName>
        <fullName evidence="1">N-acetyl-glutamate semialdehyde dehydrogenase</fullName>
        <shortName evidence="1">NAGSA dehydrogenase</shortName>
    </alternativeName>
</protein>
<organism>
    <name type="scientific">Aromatoleum aromaticum (strain DSM 19018 / LMG 30748 / EbN1)</name>
    <name type="common">Azoarcus sp. (strain EbN1)</name>
    <dbReference type="NCBI Taxonomy" id="76114"/>
    <lineage>
        <taxon>Bacteria</taxon>
        <taxon>Pseudomonadati</taxon>
        <taxon>Pseudomonadota</taxon>
        <taxon>Betaproteobacteria</taxon>
        <taxon>Rhodocyclales</taxon>
        <taxon>Rhodocyclaceae</taxon>
        <taxon>Aromatoleum</taxon>
    </lineage>
</organism>